<organism evidence="8">
    <name type="scientific">Caenorhabditis elegans</name>
    <dbReference type="NCBI Taxonomy" id="6239"/>
    <lineage>
        <taxon>Eukaryota</taxon>
        <taxon>Metazoa</taxon>
        <taxon>Ecdysozoa</taxon>
        <taxon>Nematoda</taxon>
        <taxon>Chromadorea</taxon>
        <taxon>Rhabditida</taxon>
        <taxon>Rhabditina</taxon>
        <taxon>Rhabditomorpha</taxon>
        <taxon>Rhabditoidea</taxon>
        <taxon>Rhabditidae</taxon>
        <taxon>Peloderinae</taxon>
        <taxon>Caenorhabditis</taxon>
    </lineage>
</organism>
<keyword id="KW-0025">Alternative splicing</keyword>
<keyword id="KW-0175">Coiled coil</keyword>
<keyword id="KW-0479">Metal-binding</keyword>
<keyword id="KW-0539">Nucleus</keyword>
<keyword id="KW-1185">Reference proteome</keyword>
<keyword id="KW-0862">Zinc</keyword>
<keyword id="KW-0863">Zinc-finger</keyword>
<evidence type="ECO:0000250" key="1">
    <source>
        <dbReference type="UniProtKB" id="Q3KNV8"/>
    </source>
</evidence>
<evidence type="ECO:0000255" key="2"/>
<evidence type="ECO:0000255" key="3">
    <source>
        <dbReference type="PROSITE-ProRule" id="PRU00175"/>
    </source>
</evidence>
<evidence type="ECO:0000256" key="4">
    <source>
        <dbReference type="SAM" id="MobiDB-lite"/>
    </source>
</evidence>
<evidence type="ECO:0000269" key="5">
    <source>
    </source>
</evidence>
<evidence type="ECO:0000303" key="6">
    <source>
    </source>
</evidence>
<evidence type="ECO:0000305" key="7"/>
<evidence type="ECO:0000312" key="8">
    <source>
        <dbReference type="Proteomes" id="UP000001940"/>
    </source>
</evidence>
<evidence type="ECO:0000312" key="9">
    <source>
        <dbReference type="WormBase" id="F11A10.3a"/>
    </source>
</evidence>
<evidence type="ECO:0000312" key="10">
    <source>
        <dbReference type="WormBase" id="F11A10.3b"/>
    </source>
</evidence>
<sequence>MTRKRPALAEPVSSSRSRVTRRSTTGAPSSKKKRSPEPESDADSEDDYDGPSTSQTKKLKRGNSSTNRGKAANKTKRGSFQVKQEIMDDDENEEKIDGEVENGITSREHSPDPSTFKKTAKLQTKKKKKKESPPETPPTSPSPSPSRSVSPSTTKSDISSKKGRKAVVNSVSKVKIEKESTPVKTNGRNLPPKRKKKPVEEETAEEIKLRERAERKARRIEEAKNRPKLTIEQKLAKLRKKKERRERRKEQEKEESMRQKYGQRKIKAEASKWNFGPISSINQRRRDEMMAYFPKANFLAEDGVPKVMNNFRRATVKYNMEVLNPFITCGICDGYIVDATTIIDCMHTFCKSCLLTYFESDNNTCPTCGTFIHGSHPTHYVTYDRAVNELVNQFVPKMENNELDVRKTFLRDCREALGIDTAAEDRERKERLERERITGTNRCYPLERPRFSHHRDDCQVTVNLLPGTANLPLITRPYVRCSEMTTMNTLKKFLSLQIWDDQSRYSDLDMFCDGQLMGKDFSVRFVWMMKRRGQPKSEPLIIRYHMTRT</sequence>
<feature type="chain" id="PRO_0000454045" description="Polycomb group RING finger protein 3 homolog mig-32">
    <location>
        <begin position="1"/>
        <end position="549"/>
    </location>
</feature>
<feature type="zinc finger region" description="RING-type" evidence="3">
    <location>
        <begin position="329"/>
        <end position="368"/>
    </location>
</feature>
<feature type="region of interest" description="Disordered" evidence="4">
    <location>
        <begin position="1"/>
        <end position="263"/>
    </location>
</feature>
<feature type="coiled-coil region" evidence="2">
    <location>
        <begin position="206"/>
        <end position="260"/>
    </location>
</feature>
<feature type="compositionally biased region" description="Low complexity" evidence="4">
    <location>
        <begin position="12"/>
        <end position="29"/>
    </location>
</feature>
<feature type="compositionally biased region" description="Acidic residues" evidence="4">
    <location>
        <begin position="38"/>
        <end position="49"/>
    </location>
</feature>
<feature type="compositionally biased region" description="Acidic residues" evidence="4">
    <location>
        <begin position="87"/>
        <end position="100"/>
    </location>
</feature>
<feature type="compositionally biased region" description="Basic residues" evidence="4">
    <location>
        <begin position="118"/>
        <end position="130"/>
    </location>
</feature>
<feature type="compositionally biased region" description="Pro residues" evidence="4">
    <location>
        <begin position="134"/>
        <end position="144"/>
    </location>
</feature>
<feature type="compositionally biased region" description="Low complexity" evidence="4">
    <location>
        <begin position="145"/>
        <end position="156"/>
    </location>
</feature>
<feature type="compositionally biased region" description="Basic and acidic residues" evidence="4">
    <location>
        <begin position="205"/>
        <end position="235"/>
    </location>
</feature>
<feature type="compositionally biased region" description="Basic residues" evidence="4">
    <location>
        <begin position="236"/>
        <end position="247"/>
    </location>
</feature>
<feature type="compositionally biased region" description="Basic and acidic residues" evidence="4">
    <location>
        <begin position="248"/>
        <end position="258"/>
    </location>
</feature>
<feature type="splice variant" id="VSP_061240" description="In isoform b." evidence="7">
    <location>
        <begin position="1"/>
        <end position="509"/>
    </location>
</feature>
<gene>
    <name evidence="9" type="primary">mig-32</name>
    <name evidence="9" type="ORF">F11A10.3</name>
</gene>
<accession>Q19336</accession>
<accession>D3YT24</accession>
<protein>
    <recommendedName>
        <fullName evidence="7">Polycomb group RING finger protein 3 homolog mig-32</fullName>
    </recommendedName>
    <alternativeName>
        <fullName evidence="6">RING-domain-containing protein mig-32</fullName>
    </alternativeName>
</protein>
<reference evidence="8" key="1">
    <citation type="journal article" date="1998" name="Science">
        <title>Genome sequence of the nematode C. elegans: a platform for investigating biology.</title>
        <authorList>
            <consortium name="The C. elegans sequencing consortium"/>
        </authorList>
    </citation>
    <scope>NUCLEOTIDE SEQUENCE [LARGE SCALE GENOMIC DNA]</scope>
    <source>
        <strain evidence="8">Bristol N2</strain>
    </source>
</reference>
<reference evidence="7" key="2">
    <citation type="journal article" date="2009" name="Development">
        <title>MIG-32 and SPAT-3A are PRC1 homologs that control neuronal migration in Caenorhabditis elegans.</title>
        <authorList>
            <person name="Karakuzu O."/>
            <person name="Wang D.P."/>
            <person name="Cameron S."/>
        </authorList>
    </citation>
    <scope>FUNCTION</scope>
    <scope>SUBCELLULAR LOCATION</scope>
    <scope>DEVELOPMENTAL STAGE</scope>
    <scope>DISRUPTION PHENOTYPE</scope>
</reference>
<name>PCGF3_CAEEL</name>
<comment type="function">
    <text evidence="1 5">Component of a Polycomb group (PcG) multiprotein PRC1-like complex, a complex class required to maintain the transcriptionally repressive state of many genes, throughout development (By similarity). Required for ubiquitination of histone H2A (PubMed:19211678). Plays a role in the formation of the male-specific genital sensilla (simple sense organs) known as rays (PubMed:19211678). Required for normal migration of the hermaphrodite specific neurons (HSN) and for extension of some neuronal processes (PubMed:19211678). Represses vulval fates in hypodermal cells that do not normally contribute to vulval development (PubMed:19211678).</text>
</comment>
<comment type="subunit">
    <text evidence="1">Component of a PRC1-like complex.</text>
</comment>
<comment type="subcellular location">
    <subcellularLocation>
        <location evidence="5">Nucleus</location>
    </subcellularLocation>
    <subcellularLocation>
        <location evidence="5">Nucleus</location>
        <location evidence="5">Nucleolus</location>
    </subcellularLocation>
</comment>
<comment type="alternative products">
    <event type="alternative splicing"/>
    <isoform>
        <id>Q19336-1</id>
        <name evidence="9">a</name>
        <sequence type="displayed"/>
    </isoform>
    <isoform>
        <id>Q19336-2</id>
        <name evidence="10">b</name>
        <sequence type="described" ref="VSP_061240"/>
    </isoform>
</comment>
<comment type="developmental stage">
    <text evidence="5">Expression begins early in embryogenesis and continues in larval development and into adulthood of males and hermaphrodites.</text>
</comment>
<comment type="disruption phenotype">
    <text evidence="5">Viable, but has defects in the male-specific genital sensilla (simple sense organs) known as rays (PubMed:19211678). Defects in the migration and axon extension of the hermaphrodite specific neurons (HSN) during embryogenesis (PubMed:19211678). Ubiquitin-modified histone H2A is not detected in mutants (PubMed:19211678). RNAi-mediated knockdown in a lin-15 mutant background causes a multiple vulva (Muv) phenotype (PubMed:19211678).</text>
</comment>
<dbReference type="EMBL" id="BX284604">
    <property type="protein sequence ID" value="CAA92594.4"/>
    <property type="molecule type" value="Genomic_DNA"/>
</dbReference>
<dbReference type="EMBL" id="BX284604">
    <property type="protein sequence ID" value="CBK19423.1"/>
    <property type="molecule type" value="Genomic_DNA"/>
</dbReference>
<dbReference type="RefSeq" id="NP_001255620.1">
    <molecule id="Q19336-1"/>
    <property type="nucleotide sequence ID" value="NM_001268691.2"/>
</dbReference>
<dbReference type="RefSeq" id="NP_001255621.1">
    <molecule id="Q19336-2"/>
    <property type="nucleotide sequence ID" value="NM_001268692.3"/>
</dbReference>
<dbReference type="SMR" id="Q19336"/>
<dbReference type="FunCoup" id="Q19336">
    <property type="interactions" value="1496"/>
</dbReference>
<dbReference type="IntAct" id="Q19336">
    <property type="interactions" value="1"/>
</dbReference>
<dbReference type="STRING" id="6239.F11A10.3a.2"/>
<dbReference type="PaxDb" id="6239-F11A10.3a"/>
<dbReference type="PeptideAtlas" id="Q19336"/>
<dbReference type="EnsemblMetazoa" id="F11A10.3a.1">
    <molecule id="Q19336-1"/>
    <property type="protein sequence ID" value="F11A10.3a.1"/>
    <property type="gene ID" value="WBGene00008684"/>
</dbReference>
<dbReference type="EnsemblMetazoa" id="F11A10.3b.1">
    <molecule id="Q19336-2"/>
    <property type="protein sequence ID" value="F11A10.3b.1"/>
    <property type="gene ID" value="WBGene00008684"/>
</dbReference>
<dbReference type="GeneID" id="178150"/>
<dbReference type="KEGG" id="cel:CELE_F11A10.3"/>
<dbReference type="UCSC" id="F11A10.3">
    <molecule id="Q19336-1"/>
    <property type="organism name" value="c. elegans"/>
</dbReference>
<dbReference type="AGR" id="WB:WBGene00008684"/>
<dbReference type="CTD" id="178150"/>
<dbReference type="WormBase" id="F11A10.3a">
    <molecule id="Q19336-1"/>
    <property type="protein sequence ID" value="CE44973"/>
    <property type="gene ID" value="WBGene00008684"/>
    <property type="gene designation" value="mig-32"/>
</dbReference>
<dbReference type="WormBase" id="F11A10.3b">
    <molecule id="Q19336-2"/>
    <property type="protein sequence ID" value="CE44701"/>
    <property type="gene ID" value="WBGene00008684"/>
    <property type="gene designation" value="mig-32"/>
</dbReference>
<dbReference type="eggNOG" id="KOG1040">
    <property type="taxonomic scope" value="Eukaryota"/>
</dbReference>
<dbReference type="eggNOG" id="KOG2660">
    <property type="taxonomic scope" value="Eukaryota"/>
</dbReference>
<dbReference type="GeneTree" id="ENSGT00940000158395"/>
<dbReference type="HOGENOM" id="CLU_020700_0_0_1"/>
<dbReference type="InParanoid" id="Q19336"/>
<dbReference type="OMA" id="CQVTVNL"/>
<dbReference type="OrthoDB" id="1305878at2759"/>
<dbReference type="PRO" id="PR:Q19336"/>
<dbReference type="Proteomes" id="UP000001940">
    <property type="component" value="Chromosome IV"/>
</dbReference>
<dbReference type="Bgee" id="WBGene00008684">
    <property type="expression patterns" value="Expressed in embryo and 4 other cell types or tissues"/>
</dbReference>
<dbReference type="ExpressionAtlas" id="Q19336">
    <property type="expression patterns" value="baseline and differential"/>
</dbReference>
<dbReference type="GO" id="GO:0005730">
    <property type="term" value="C:nucleolus"/>
    <property type="evidence" value="ECO:0000314"/>
    <property type="project" value="WormBase"/>
</dbReference>
<dbReference type="GO" id="GO:0005634">
    <property type="term" value="C:nucleus"/>
    <property type="evidence" value="ECO:0000314"/>
    <property type="project" value="WormBase"/>
</dbReference>
<dbReference type="GO" id="GO:0035102">
    <property type="term" value="C:PRC1 complex"/>
    <property type="evidence" value="ECO:0000318"/>
    <property type="project" value="GO_Central"/>
</dbReference>
<dbReference type="GO" id="GO:0140852">
    <property type="term" value="F:histone ubiquitin ligase activity"/>
    <property type="evidence" value="ECO:0000315"/>
    <property type="project" value="WormBase"/>
</dbReference>
<dbReference type="GO" id="GO:0008270">
    <property type="term" value="F:zinc ion binding"/>
    <property type="evidence" value="ECO:0007669"/>
    <property type="project" value="UniProtKB-KW"/>
</dbReference>
<dbReference type="GO" id="GO:0040027">
    <property type="term" value="P:negative regulation of vulval development"/>
    <property type="evidence" value="ECO:0000316"/>
    <property type="project" value="WormBase"/>
</dbReference>
<dbReference type="GO" id="GO:0045138">
    <property type="term" value="P:nematode male tail tip morphogenesis"/>
    <property type="evidence" value="ECO:0000315"/>
    <property type="project" value="WormBase"/>
</dbReference>
<dbReference type="GO" id="GO:0048841">
    <property type="term" value="P:regulation of axon extension involved in axon guidance"/>
    <property type="evidence" value="ECO:0000315"/>
    <property type="project" value="WormBase"/>
</dbReference>
<dbReference type="GO" id="GO:0030334">
    <property type="term" value="P:regulation of cell migration"/>
    <property type="evidence" value="ECO:0000315"/>
    <property type="project" value="WormBase"/>
</dbReference>
<dbReference type="GO" id="GO:0046662">
    <property type="term" value="P:regulation of egg-laying behavior"/>
    <property type="evidence" value="ECO:0000315"/>
    <property type="project" value="WormBase"/>
</dbReference>
<dbReference type="GO" id="GO:0006357">
    <property type="term" value="P:regulation of transcription by RNA polymerase II"/>
    <property type="evidence" value="ECO:0000318"/>
    <property type="project" value="GO_Central"/>
</dbReference>
<dbReference type="GO" id="GO:0022414">
    <property type="term" value="P:reproductive process"/>
    <property type="evidence" value="ECO:0000315"/>
    <property type="project" value="WormBase"/>
</dbReference>
<dbReference type="CDD" id="cd16102">
    <property type="entry name" value="RAWUL_PCGF_like"/>
    <property type="match status" value="1"/>
</dbReference>
<dbReference type="CDD" id="cd16735">
    <property type="entry name" value="RING-HC_PCGF3"/>
    <property type="match status" value="1"/>
</dbReference>
<dbReference type="FunFam" id="3.30.40.10:FF:000122">
    <property type="entry name" value="polycomb group RING finger protein 1"/>
    <property type="match status" value="1"/>
</dbReference>
<dbReference type="FunFam" id="3.10.20.90:FF:000431">
    <property type="entry name" value="Protein CBG06226"/>
    <property type="match status" value="1"/>
</dbReference>
<dbReference type="Gene3D" id="3.10.20.90">
    <property type="entry name" value="Phosphatidylinositol 3-kinase Catalytic Subunit, Chain A, domain 1"/>
    <property type="match status" value="1"/>
</dbReference>
<dbReference type="Gene3D" id="3.30.40.10">
    <property type="entry name" value="Zinc/RING finger domain, C3HC4 (zinc finger)"/>
    <property type="match status" value="1"/>
</dbReference>
<dbReference type="InterPro" id="IPR051507">
    <property type="entry name" value="PcG_RING_finger"/>
</dbReference>
<dbReference type="InterPro" id="IPR018957">
    <property type="entry name" value="Znf_C3HC4_RING-type"/>
</dbReference>
<dbReference type="InterPro" id="IPR001841">
    <property type="entry name" value="Znf_RING"/>
</dbReference>
<dbReference type="InterPro" id="IPR013083">
    <property type="entry name" value="Znf_RING/FYVE/PHD"/>
</dbReference>
<dbReference type="InterPro" id="IPR017907">
    <property type="entry name" value="Znf_RING_CS"/>
</dbReference>
<dbReference type="PANTHER" id="PTHR45893">
    <property type="entry name" value="POLYCOMB GROUP RING FINGER PROTEIN"/>
    <property type="match status" value="1"/>
</dbReference>
<dbReference type="Pfam" id="PF00097">
    <property type="entry name" value="zf-C3HC4"/>
    <property type="match status" value="1"/>
</dbReference>
<dbReference type="SMART" id="SM00184">
    <property type="entry name" value="RING"/>
    <property type="match status" value="1"/>
</dbReference>
<dbReference type="SUPFAM" id="SSF57850">
    <property type="entry name" value="RING/U-box"/>
    <property type="match status" value="1"/>
</dbReference>
<dbReference type="PROSITE" id="PS00518">
    <property type="entry name" value="ZF_RING_1"/>
    <property type="match status" value="1"/>
</dbReference>
<dbReference type="PROSITE" id="PS50089">
    <property type="entry name" value="ZF_RING_2"/>
    <property type="match status" value="1"/>
</dbReference>
<proteinExistence type="evidence at transcript level"/>